<name>TBB_PSEAM</name>
<organism>
    <name type="scientific">Pseudopleuronectes americanus</name>
    <name type="common">Winter flounder</name>
    <name type="synonym">Pleuronectes americanus</name>
    <dbReference type="NCBI Taxonomy" id="8265"/>
    <lineage>
        <taxon>Eukaryota</taxon>
        <taxon>Metazoa</taxon>
        <taxon>Chordata</taxon>
        <taxon>Craniata</taxon>
        <taxon>Vertebrata</taxon>
        <taxon>Euteleostomi</taxon>
        <taxon>Actinopterygii</taxon>
        <taxon>Neopterygii</taxon>
        <taxon>Teleostei</taxon>
        <taxon>Neoteleostei</taxon>
        <taxon>Acanthomorphata</taxon>
        <taxon>Carangaria</taxon>
        <taxon>Pleuronectiformes</taxon>
        <taxon>Pleuronectoidei</taxon>
        <taxon>Pleuronectidae</taxon>
        <taxon>Pseudopleuronectes</taxon>
    </lineage>
</organism>
<sequence length="445" mass="49776">MREILHLQAGQCGNQIGAKFWEVISDEHGIDPSGTYHGDNELQLERINVYYNEATGGKYVPRAVLVDLEPGTMDSVRSGAFGQIFRPDNFVFGQSGAGNNWAKGHYTEGAELVDSVLDVVRKEAESCDCLQGFQLTHSLGGGTGSGMGTLLISKIREEYPDRIMNTFSVVPSPKVSDTVVEPYNATLSVHQLVENTDETYCIDNEALYDICFRTLKLTTPTYGDLNHLVSATMSGVTTCLRFPGQLNADLRKLAVNMVPFPRLHFFMPGFAPLTSRGSQQYRALTVPELTQQMFDAKNMMAACDPRHGRYLTVAAIFRGRMSMKEVDEQMLNVQNKNSSYFVEWIPNNVKTAVCDIPPRGLKMSSTFIGNSTAIQELFKRMSEQFTAMFRRKAFLHWYTGEGMDEMEFTEAESNMNDLVSEYQQYQDATAEEEGEGEEEGDEEVA</sequence>
<dbReference type="EMBL" id="X74492">
    <property type="protein sequence ID" value="CAA52604.1"/>
    <property type="molecule type" value="mRNA"/>
</dbReference>
<dbReference type="PIR" id="S37144">
    <property type="entry name" value="S37144"/>
</dbReference>
<dbReference type="SMR" id="Q91240"/>
<dbReference type="GO" id="GO:0005737">
    <property type="term" value="C:cytoplasm"/>
    <property type="evidence" value="ECO:0007669"/>
    <property type="project" value="UniProtKB-KW"/>
</dbReference>
<dbReference type="GO" id="GO:0005874">
    <property type="term" value="C:microtubule"/>
    <property type="evidence" value="ECO:0007669"/>
    <property type="project" value="UniProtKB-KW"/>
</dbReference>
<dbReference type="GO" id="GO:0005525">
    <property type="term" value="F:GTP binding"/>
    <property type="evidence" value="ECO:0007669"/>
    <property type="project" value="UniProtKB-KW"/>
</dbReference>
<dbReference type="GO" id="GO:0003924">
    <property type="term" value="F:GTPase activity"/>
    <property type="evidence" value="ECO:0007669"/>
    <property type="project" value="InterPro"/>
</dbReference>
<dbReference type="GO" id="GO:0046872">
    <property type="term" value="F:metal ion binding"/>
    <property type="evidence" value="ECO:0007669"/>
    <property type="project" value="UniProtKB-KW"/>
</dbReference>
<dbReference type="GO" id="GO:0005200">
    <property type="term" value="F:structural constituent of cytoskeleton"/>
    <property type="evidence" value="ECO:0007669"/>
    <property type="project" value="InterPro"/>
</dbReference>
<dbReference type="GO" id="GO:0007017">
    <property type="term" value="P:microtubule-based process"/>
    <property type="evidence" value="ECO:0007669"/>
    <property type="project" value="InterPro"/>
</dbReference>
<dbReference type="CDD" id="cd02187">
    <property type="entry name" value="beta_tubulin"/>
    <property type="match status" value="1"/>
</dbReference>
<dbReference type="FunFam" id="1.10.287.600:FF:000006">
    <property type="entry name" value="Tubulin beta chain"/>
    <property type="match status" value="1"/>
</dbReference>
<dbReference type="FunFam" id="3.30.1330.20:FF:000002">
    <property type="entry name" value="Tubulin beta chain"/>
    <property type="match status" value="1"/>
</dbReference>
<dbReference type="FunFam" id="3.40.50.1440:FF:000003">
    <property type="entry name" value="Tubulin beta chain"/>
    <property type="match status" value="1"/>
</dbReference>
<dbReference type="Gene3D" id="1.10.287.600">
    <property type="entry name" value="Helix hairpin bin"/>
    <property type="match status" value="1"/>
</dbReference>
<dbReference type="Gene3D" id="3.30.1330.20">
    <property type="entry name" value="Tubulin/FtsZ, C-terminal domain"/>
    <property type="match status" value="1"/>
</dbReference>
<dbReference type="Gene3D" id="3.40.50.1440">
    <property type="entry name" value="Tubulin/FtsZ, GTPase domain"/>
    <property type="match status" value="1"/>
</dbReference>
<dbReference type="InterPro" id="IPR013838">
    <property type="entry name" value="Beta-tubulin_BS"/>
</dbReference>
<dbReference type="InterPro" id="IPR002453">
    <property type="entry name" value="Beta_tubulin"/>
</dbReference>
<dbReference type="InterPro" id="IPR008280">
    <property type="entry name" value="Tub_FtsZ_C"/>
</dbReference>
<dbReference type="InterPro" id="IPR000217">
    <property type="entry name" value="Tubulin"/>
</dbReference>
<dbReference type="InterPro" id="IPR037103">
    <property type="entry name" value="Tubulin/FtsZ-like_C"/>
</dbReference>
<dbReference type="InterPro" id="IPR018316">
    <property type="entry name" value="Tubulin/FtsZ_2-layer-sand-dom"/>
</dbReference>
<dbReference type="InterPro" id="IPR036525">
    <property type="entry name" value="Tubulin/FtsZ_GTPase_sf"/>
</dbReference>
<dbReference type="InterPro" id="IPR023123">
    <property type="entry name" value="Tubulin_C"/>
</dbReference>
<dbReference type="InterPro" id="IPR017975">
    <property type="entry name" value="Tubulin_CS"/>
</dbReference>
<dbReference type="InterPro" id="IPR003008">
    <property type="entry name" value="Tubulin_FtsZ_GTPase"/>
</dbReference>
<dbReference type="PANTHER" id="PTHR11588">
    <property type="entry name" value="TUBULIN"/>
    <property type="match status" value="1"/>
</dbReference>
<dbReference type="Pfam" id="PF00091">
    <property type="entry name" value="Tubulin"/>
    <property type="match status" value="1"/>
</dbReference>
<dbReference type="Pfam" id="PF03953">
    <property type="entry name" value="Tubulin_C"/>
    <property type="match status" value="1"/>
</dbReference>
<dbReference type="PRINTS" id="PR01163">
    <property type="entry name" value="BETATUBULIN"/>
</dbReference>
<dbReference type="PRINTS" id="PR01161">
    <property type="entry name" value="TUBULIN"/>
</dbReference>
<dbReference type="SMART" id="SM00864">
    <property type="entry name" value="Tubulin"/>
    <property type="match status" value="1"/>
</dbReference>
<dbReference type="SMART" id="SM00865">
    <property type="entry name" value="Tubulin_C"/>
    <property type="match status" value="1"/>
</dbReference>
<dbReference type="SUPFAM" id="SSF55307">
    <property type="entry name" value="Tubulin C-terminal domain-like"/>
    <property type="match status" value="1"/>
</dbReference>
<dbReference type="SUPFAM" id="SSF52490">
    <property type="entry name" value="Tubulin nucleotide-binding domain-like"/>
    <property type="match status" value="1"/>
</dbReference>
<dbReference type="PROSITE" id="PS00227">
    <property type="entry name" value="TUBULIN"/>
    <property type="match status" value="1"/>
</dbReference>
<dbReference type="PROSITE" id="PS00228">
    <property type="entry name" value="TUBULIN_B_AUTOREG"/>
    <property type="match status" value="1"/>
</dbReference>
<accession>Q91240</accession>
<feature type="chain" id="PRO_0000048270" description="Tubulin beta chain">
    <location>
        <begin position="1"/>
        <end position="445"/>
    </location>
</feature>
<feature type="region of interest" description="Disordered" evidence="7">
    <location>
        <begin position="421"/>
        <end position="445"/>
    </location>
</feature>
<feature type="short sequence motif" description="MREI motif" evidence="2">
    <location>
        <begin position="1"/>
        <end position="4"/>
    </location>
</feature>
<feature type="compositionally biased region" description="Acidic residues" evidence="7">
    <location>
        <begin position="429"/>
        <end position="445"/>
    </location>
</feature>
<feature type="binding site" evidence="4">
    <location>
        <position position="11"/>
    </location>
    <ligand>
        <name>GTP</name>
        <dbReference type="ChEBI" id="CHEBI:37565"/>
    </ligand>
</feature>
<feature type="binding site" evidence="3">
    <location>
        <position position="69"/>
    </location>
    <ligand>
        <name>GTP</name>
        <dbReference type="ChEBI" id="CHEBI:37565"/>
    </ligand>
</feature>
<feature type="binding site" evidence="3">
    <location>
        <position position="69"/>
    </location>
    <ligand>
        <name>Mg(2+)</name>
        <dbReference type="ChEBI" id="CHEBI:18420"/>
    </ligand>
</feature>
<feature type="binding site" evidence="4">
    <location>
        <position position="138"/>
    </location>
    <ligand>
        <name>GTP</name>
        <dbReference type="ChEBI" id="CHEBI:37565"/>
    </ligand>
</feature>
<feature type="binding site" evidence="4">
    <location>
        <position position="142"/>
    </location>
    <ligand>
        <name>GTP</name>
        <dbReference type="ChEBI" id="CHEBI:37565"/>
    </ligand>
</feature>
<feature type="binding site" evidence="4">
    <location>
        <position position="143"/>
    </location>
    <ligand>
        <name>GTP</name>
        <dbReference type="ChEBI" id="CHEBI:37565"/>
    </ligand>
</feature>
<feature type="binding site" evidence="4">
    <location>
        <position position="144"/>
    </location>
    <ligand>
        <name>GTP</name>
        <dbReference type="ChEBI" id="CHEBI:37565"/>
    </ligand>
</feature>
<feature type="binding site" evidence="4">
    <location>
        <position position="204"/>
    </location>
    <ligand>
        <name>GTP</name>
        <dbReference type="ChEBI" id="CHEBI:37565"/>
    </ligand>
</feature>
<feature type="binding site" evidence="4">
    <location>
        <position position="226"/>
    </location>
    <ligand>
        <name>GTP</name>
        <dbReference type="ChEBI" id="CHEBI:37565"/>
    </ligand>
</feature>
<feature type="modified residue" description="5-glutamyl polyglutamate" evidence="5">
    <location>
        <position position="438"/>
    </location>
</feature>
<protein>
    <recommendedName>
        <fullName>Tubulin beta chain</fullName>
    </recommendedName>
    <alternativeName>
        <fullName>Beta-tubulin</fullName>
    </alternativeName>
</protein>
<reference key="1">
    <citation type="submission" date="1993-08" db="EMBL/GenBank/DDBJ databases">
        <title>The predicted amino acid sequence of a testis B-tubulin from winter flounder.</title>
        <authorList>
            <person name="Watson C.E."/>
            <person name="Yoshida E.N."/>
            <person name="Davies P.L."/>
        </authorList>
    </citation>
    <scope>NUCLEOTIDE SEQUENCE [MRNA]</scope>
    <source>
        <tissue>Testis</tissue>
    </source>
</reference>
<keyword id="KW-0963">Cytoplasm</keyword>
<keyword id="KW-0206">Cytoskeleton</keyword>
<keyword id="KW-0342">GTP-binding</keyword>
<keyword id="KW-1017">Isopeptide bond</keyword>
<keyword id="KW-0460">Magnesium</keyword>
<keyword id="KW-0479">Metal-binding</keyword>
<keyword id="KW-0493">Microtubule</keyword>
<keyword id="KW-0547">Nucleotide-binding</keyword>
<comment type="function">
    <text>Tubulin is the major constituent of microtubules, a cylinder consisting of laterally associated linear protofilaments composed of alpha- and beta-tubulin heterodimers. Microtubules grow by the addition of GTP-tubulin dimers to the microtubule end, where a stabilizing cap forms. Below the cap, tubulin dimers are in GDP-bound state, owing to GTPase activity of alpha-tubulin.</text>
</comment>
<comment type="cofactor">
    <cofactor evidence="3">
        <name>Mg(2+)</name>
        <dbReference type="ChEBI" id="CHEBI:18420"/>
    </cofactor>
</comment>
<comment type="subunit">
    <text>Dimer of alpha and beta chains. A typical microtubule is a hollow water-filled tube with an outer diameter of 25 nm and an inner diameter of 15 nM. Alpha-beta heterodimers associate head-to-tail to form protofilaments running lengthwise along the microtubule wall with the beta-tubulin subunit facing the microtubule plus end conferring a structural polarity. Microtubules usually have 13 protofilaments but different protofilament numbers can be found in some organisms and specialized cells.</text>
</comment>
<comment type="subcellular location">
    <subcellularLocation>
        <location>Cytoplasm</location>
        <location>Cytoskeleton</location>
    </subcellularLocation>
</comment>
<comment type="tissue specificity">
    <text>Brain.</text>
</comment>
<comment type="domain">
    <text evidence="2">The MREI motif is common among all beta-tubulin isoforms and may be critical for tubulin autoregulation.</text>
</comment>
<comment type="PTM">
    <text evidence="1">Some glutamate residues at the C-terminus are polyglycylated, resulting in polyglycine chains on the gamma-carboxyl group. Glycylation is mainly limited to tubulin incorporated into axonemes (cilia and flagella) whereas glutamylation is prevalent in neuronal cells, centrioles, axonemes, and the mitotic spindle. Both modifications can coexist on the same protein on adjacent residues, and lowering polyglycylation levels increases polyglutamylation, and reciprocally. The precise function of polyglycylation is still unclear.</text>
</comment>
<comment type="PTM">
    <text evidence="1 6">Some glutamate residues at the C-terminus are polyglutamylated, resulting in polyglutamate chains on the gamma-carboxyl group (By similarity). Polyglutamylation plays a key role in microtubule severing by spastin (SPAST). SPAST preferentially recognizes and acts on microtubules decorated with short polyglutamate tails: severing activity by SPAST increases as the number of glutamates per tubulin rises from one to eight, but decreases beyond this glutamylation threshold (By similarity).</text>
</comment>
<comment type="similarity">
    <text evidence="8">Belongs to the tubulin family.</text>
</comment>
<evidence type="ECO:0000250" key="1">
    <source>
        <dbReference type="UniProtKB" id="A2AQ07"/>
    </source>
</evidence>
<evidence type="ECO:0000250" key="2">
    <source>
        <dbReference type="UniProtKB" id="P07437"/>
    </source>
</evidence>
<evidence type="ECO:0000250" key="3">
    <source>
        <dbReference type="UniProtKB" id="P68363"/>
    </source>
</evidence>
<evidence type="ECO:0000250" key="4">
    <source>
        <dbReference type="UniProtKB" id="Q13509"/>
    </source>
</evidence>
<evidence type="ECO:0000250" key="5">
    <source>
        <dbReference type="UniProtKB" id="Q2T9S0"/>
    </source>
</evidence>
<evidence type="ECO:0000250" key="6">
    <source>
        <dbReference type="UniProtKB" id="Q71U36"/>
    </source>
</evidence>
<evidence type="ECO:0000256" key="7">
    <source>
        <dbReference type="SAM" id="MobiDB-lite"/>
    </source>
</evidence>
<evidence type="ECO:0000305" key="8"/>
<proteinExistence type="evidence at transcript level"/>